<reference key="1">
    <citation type="journal article" date="1997" name="J. Bacteriol.">
        <title>Complete genome sequence of Methanobacterium thermoautotrophicum deltaH: functional analysis and comparative genomics.</title>
        <authorList>
            <person name="Smith D.R."/>
            <person name="Doucette-Stamm L.A."/>
            <person name="Deloughery C."/>
            <person name="Lee H.-M."/>
            <person name="Dubois J."/>
            <person name="Aldredge T."/>
            <person name="Bashirzadeh R."/>
            <person name="Blakely D."/>
            <person name="Cook R."/>
            <person name="Gilbert K."/>
            <person name="Harrison D."/>
            <person name="Hoang L."/>
            <person name="Keagle P."/>
            <person name="Lumm W."/>
            <person name="Pothier B."/>
            <person name="Qiu D."/>
            <person name="Spadafora R."/>
            <person name="Vicare R."/>
            <person name="Wang Y."/>
            <person name="Wierzbowski J."/>
            <person name="Gibson R."/>
            <person name="Jiwani N."/>
            <person name="Caruso A."/>
            <person name="Bush D."/>
            <person name="Safer H."/>
            <person name="Patwell D."/>
            <person name="Prabhakar S."/>
            <person name="McDougall S."/>
            <person name="Shimer G."/>
            <person name="Goyal A."/>
            <person name="Pietrovski S."/>
            <person name="Church G.M."/>
            <person name="Daniels C.J."/>
            <person name="Mao J.-I."/>
            <person name="Rice P."/>
            <person name="Noelling J."/>
            <person name="Reeve J.N."/>
        </authorList>
    </citation>
    <scope>NUCLEOTIDE SEQUENCE [LARGE SCALE GENOMIC DNA]</scope>
    <source>
        <strain>ATCC 29096 / DSM 1053 / JCM 10044 / NBRC 100330 / Delta H</strain>
    </source>
</reference>
<proteinExistence type="inferred from homology"/>
<sequence length="289" mass="30475">MMVVKKTVRSPGSATVINAIATGRGSAFGIGLRVEAEAELIDSGVECISREGADTSLMELCTRMVIEHYGVDAGVRVVTSSDLPVASGLSSSSAASNATVMAVSSLLSDEFGLQPMEDFEMLNMAVDASLQAGVSVTGAYDDASASFYGGLTVTDNMERRIILREPMENQKVLIYMPDRKSLTAQSDVPRMKLLAPWVDMAFREVLDGRVHSALTLNGILYCASLGFDPGIALDALEAGALAAGLSGTGPSFVALTHEDSEADIIDAWENLEGDVLVTSVDNEGTRVLE</sequence>
<evidence type="ECO:0000250" key="1"/>
<evidence type="ECO:0000255" key="2"/>
<evidence type="ECO:0000305" key="3"/>
<feature type="chain" id="PRO_0000141576" description="Shikimate kinase">
    <location>
        <begin position="1"/>
        <end position="289"/>
    </location>
</feature>
<feature type="binding site" evidence="2">
    <location>
        <begin position="84"/>
        <end position="94"/>
    </location>
    <ligand>
        <name>ATP</name>
        <dbReference type="ChEBI" id="CHEBI:30616"/>
    </ligand>
</feature>
<keyword id="KW-0028">Amino-acid biosynthesis</keyword>
<keyword id="KW-0057">Aromatic amino acid biosynthesis</keyword>
<keyword id="KW-0067">ATP-binding</keyword>
<keyword id="KW-0963">Cytoplasm</keyword>
<keyword id="KW-0418">Kinase</keyword>
<keyword id="KW-0547">Nucleotide-binding</keyword>
<keyword id="KW-1185">Reference proteome</keyword>
<keyword id="KW-0808">Transferase</keyword>
<protein>
    <recommendedName>
        <fullName>Shikimate kinase</fullName>
        <shortName>SK</shortName>
        <ecNumber>2.7.1.71</ecNumber>
    </recommendedName>
</protein>
<accession>O26896</accession>
<comment type="catalytic activity">
    <reaction>
        <text>shikimate + ATP = 3-phosphoshikimate + ADP + H(+)</text>
        <dbReference type="Rhea" id="RHEA:13121"/>
        <dbReference type="ChEBI" id="CHEBI:15378"/>
        <dbReference type="ChEBI" id="CHEBI:30616"/>
        <dbReference type="ChEBI" id="CHEBI:36208"/>
        <dbReference type="ChEBI" id="CHEBI:145989"/>
        <dbReference type="ChEBI" id="CHEBI:456216"/>
        <dbReference type="EC" id="2.7.1.71"/>
    </reaction>
</comment>
<comment type="pathway">
    <text>Metabolic intermediate biosynthesis; chorismate biosynthesis; chorismate from D-erythrose 4-phosphate and phosphoenolpyruvate: step 5/7.</text>
</comment>
<comment type="subcellular location">
    <subcellularLocation>
        <location evidence="1">Cytoplasm</location>
    </subcellularLocation>
</comment>
<comment type="similarity">
    <text evidence="3">Belongs to the GHMP kinase family. Archaeal shikimate kinase subfamily.</text>
</comment>
<dbReference type="EC" id="2.7.1.71"/>
<dbReference type="EMBL" id="AE000666">
    <property type="protein sequence ID" value="AAB85305.1"/>
    <property type="molecule type" value="Genomic_DNA"/>
</dbReference>
<dbReference type="PIR" id="E69207">
    <property type="entry name" value="E69207"/>
</dbReference>
<dbReference type="SMR" id="O26896"/>
<dbReference type="FunCoup" id="O26896">
    <property type="interactions" value="76"/>
</dbReference>
<dbReference type="STRING" id="187420.MTH_805"/>
<dbReference type="PaxDb" id="187420-MTH_805"/>
<dbReference type="EnsemblBacteria" id="AAB85305">
    <property type="protein sequence ID" value="AAB85305"/>
    <property type="gene ID" value="MTH_805"/>
</dbReference>
<dbReference type="KEGG" id="mth:MTH_805"/>
<dbReference type="PATRIC" id="fig|187420.15.peg.790"/>
<dbReference type="HOGENOM" id="CLU_073768_0_0_2"/>
<dbReference type="InParanoid" id="O26896"/>
<dbReference type="UniPathway" id="UPA00053">
    <property type="reaction ID" value="UER00088"/>
</dbReference>
<dbReference type="Proteomes" id="UP000005223">
    <property type="component" value="Chromosome"/>
</dbReference>
<dbReference type="GO" id="GO:0005737">
    <property type="term" value="C:cytoplasm"/>
    <property type="evidence" value="ECO:0007669"/>
    <property type="project" value="UniProtKB-SubCell"/>
</dbReference>
<dbReference type="GO" id="GO:0005524">
    <property type="term" value="F:ATP binding"/>
    <property type="evidence" value="ECO:0007669"/>
    <property type="project" value="UniProtKB-UniRule"/>
</dbReference>
<dbReference type="GO" id="GO:0004765">
    <property type="term" value="F:shikimate kinase activity"/>
    <property type="evidence" value="ECO:0007669"/>
    <property type="project" value="UniProtKB-UniRule"/>
</dbReference>
<dbReference type="GO" id="GO:0008652">
    <property type="term" value="P:amino acid biosynthetic process"/>
    <property type="evidence" value="ECO:0007669"/>
    <property type="project" value="UniProtKB-KW"/>
</dbReference>
<dbReference type="GO" id="GO:0009073">
    <property type="term" value="P:aromatic amino acid family biosynthetic process"/>
    <property type="evidence" value="ECO:0007669"/>
    <property type="project" value="UniProtKB-KW"/>
</dbReference>
<dbReference type="GO" id="GO:0009423">
    <property type="term" value="P:chorismate biosynthetic process"/>
    <property type="evidence" value="ECO:0007669"/>
    <property type="project" value="UniProtKB-UniRule"/>
</dbReference>
<dbReference type="Gene3D" id="3.30.230.10">
    <property type="match status" value="1"/>
</dbReference>
<dbReference type="Gene3D" id="3.30.70.890">
    <property type="entry name" value="GHMP kinase, C-terminal domain"/>
    <property type="match status" value="1"/>
</dbReference>
<dbReference type="HAMAP" id="MF_00370">
    <property type="entry name" value="Shik_kinase_arch"/>
    <property type="match status" value="1"/>
</dbReference>
<dbReference type="InterPro" id="IPR013750">
    <property type="entry name" value="GHMP_kinase_C_dom"/>
</dbReference>
<dbReference type="InterPro" id="IPR036554">
    <property type="entry name" value="GHMP_kinase_C_sf"/>
</dbReference>
<dbReference type="InterPro" id="IPR006204">
    <property type="entry name" value="GHMP_kinase_N_dom"/>
</dbReference>
<dbReference type="InterPro" id="IPR006203">
    <property type="entry name" value="GHMP_knse_ATP-bd_CS"/>
</dbReference>
<dbReference type="InterPro" id="IPR020568">
    <property type="entry name" value="Ribosomal_Su5_D2-typ_SF"/>
</dbReference>
<dbReference type="InterPro" id="IPR014721">
    <property type="entry name" value="Ribsml_uS5_D2-typ_fold_subgr"/>
</dbReference>
<dbReference type="InterPro" id="IPR010189">
    <property type="entry name" value="SK_arc"/>
</dbReference>
<dbReference type="NCBIfam" id="TIGR01920">
    <property type="entry name" value="Shik_kin_archae"/>
    <property type="match status" value="1"/>
</dbReference>
<dbReference type="PANTHER" id="PTHR20861">
    <property type="entry name" value="HOMOSERINE/4-DIPHOSPHOCYTIDYL-2-C-METHYL-D-ERYTHRITOL KINASE"/>
    <property type="match status" value="1"/>
</dbReference>
<dbReference type="PANTHER" id="PTHR20861:SF3">
    <property type="entry name" value="SHIKIMATE KINASE"/>
    <property type="match status" value="1"/>
</dbReference>
<dbReference type="Pfam" id="PF08544">
    <property type="entry name" value="GHMP_kinases_C"/>
    <property type="match status" value="1"/>
</dbReference>
<dbReference type="Pfam" id="PF00288">
    <property type="entry name" value="GHMP_kinases_N"/>
    <property type="match status" value="1"/>
</dbReference>
<dbReference type="PIRSF" id="PIRSF005758">
    <property type="entry name" value="Shikimt_kin_arch"/>
    <property type="match status" value="1"/>
</dbReference>
<dbReference type="SUPFAM" id="SSF55060">
    <property type="entry name" value="GHMP Kinase, C-terminal domain"/>
    <property type="match status" value="1"/>
</dbReference>
<dbReference type="SUPFAM" id="SSF54211">
    <property type="entry name" value="Ribosomal protein S5 domain 2-like"/>
    <property type="match status" value="1"/>
</dbReference>
<dbReference type="PROSITE" id="PS00627">
    <property type="entry name" value="GHMP_KINASES_ATP"/>
    <property type="match status" value="1"/>
</dbReference>
<gene>
    <name type="primary">aroK</name>
    <name type="ordered locus">MTH_805</name>
</gene>
<name>AROK_METTH</name>
<organism>
    <name type="scientific">Methanothermobacter thermautotrophicus (strain ATCC 29096 / DSM 1053 / JCM 10044 / NBRC 100330 / Delta H)</name>
    <name type="common">Methanobacterium thermoautotrophicum</name>
    <dbReference type="NCBI Taxonomy" id="187420"/>
    <lineage>
        <taxon>Archaea</taxon>
        <taxon>Methanobacteriati</taxon>
        <taxon>Methanobacteriota</taxon>
        <taxon>Methanomada group</taxon>
        <taxon>Methanobacteria</taxon>
        <taxon>Methanobacteriales</taxon>
        <taxon>Methanobacteriaceae</taxon>
        <taxon>Methanothermobacter</taxon>
    </lineage>
</organism>